<gene>
    <name evidence="1" type="primary">psbL</name>
</gene>
<name>PSBL_STEPS</name>
<comment type="function">
    <text evidence="1">One of the components of the core complex of photosystem II (PSII). PSII is a light-driven water:plastoquinone oxidoreductase that uses light energy to abstract electrons from H(2)O, generating O(2) and a proton gradient subsequently used for ATP formation. It consists of a core antenna complex that captures photons, and an electron transfer chain that converts photonic excitation into a charge separation. This subunit is found at the monomer-monomer interface and is required for correct PSII assembly and/or dimerization.</text>
</comment>
<comment type="subunit">
    <text evidence="1">PSII is composed of 1 copy each of membrane proteins PsbA, PsbB, PsbC, PsbD, PsbE, PsbF, PsbH, PsbI, PsbJ, PsbK, PsbL, PsbM, PsbT, PsbX, PsbY, PsbZ, Psb30/Ycf12, at least 3 peripheral proteins of the oxygen-evolving complex and a large number of cofactors. It forms dimeric complexes.</text>
</comment>
<comment type="subcellular location">
    <subcellularLocation>
        <location evidence="1">Plastid</location>
        <location evidence="1">Chloroplast thylakoid membrane</location>
        <topology evidence="1">Single-pass membrane protein</topology>
    </subcellularLocation>
</comment>
<comment type="similarity">
    <text evidence="1">Belongs to the PsbL family.</text>
</comment>
<evidence type="ECO:0000255" key="1">
    <source>
        <dbReference type="HAMAP-Rule" id="MF_01317"/>
    </source>
</evidence>
<sequence length="38" mass="4497">MTQSNPNEQNVELNRTSLYWGLLLIFVLAVLFSNYFFN</sequence>
<keyword id="KW-0150">Chloroplast</keyword>
<keyword id="KW-0472">Membrane</keyword>
<keyword id="KW-0602">Photosynthesis</keyword>
<keyword id="KW-0604">Photosystem II</keyword>
<keyword id="KW-0934">Plastid</keyword>
<keyword id="KW-0674">Reaction center</keyword>
<keyword id="KW-0793">Thylakoid</keyword>
<keyword id="KW-0812">Transmembrane</keyword>
<keyword id="KW-1133">Transmembrane helix</keyword>
<dbReference type="EMBL" id="AF528886">
    <property type="protein sequence ID" value="AAQ09332.1"/>
    <property type="molecule type" value="Genomic_DNA"/>
</dbReference>
<dbReference type="RefSeq" id="YP_009418635.1">
    <property type="nucleotide sequence ID" value="NC_035697.1"/>
</dbReference>
<dbReference type="SMR" id="Q6EYP1"/>
<dbReference type="GeneID" id="33907909"/>
<dbReference type="GO" id="GO:0009535">
    <property type="term" value="C:chloroplast thylakoid membrane"/>
    <property type="evidence" value="ECO:0007669"/>
    <property type="project" value="UniProtKB-SubCell"/>
</dbReference>
<dbReference type="GO" id="GO:0009539">
    <property type="term" value="C:photosystem II reaction center"/>
    <property type="evidence" value="ECO:0007669"/>
    <property type="project" value="InterPro"/>
</dbReference>
<dbReference type="GO" id="GO:0015979">
    <property type="term" value="P:photosynthesis"/>
    <property type="evidence" value="ECO:0007669"/>
    <property type="project" value="UniProtKB-UniRule"/>
</dbReference>
<dbReference type="HAMAP" id="MF_01317">
    <property type="entry name" value="PSII_PsbL"/>
    <property type="match status" value="1"/>
</dbReference>
<dbReference type="InterPro" id="IPR003372">
    <property type="entry name" value="PSII_PsbL"/>
</dbReference>
<dbReference type="InterPro" id="IPR037266">
    <property type="entry name" value="PSII_PsbL_sf"/>
</dbReference>
<dbReference type="NCBIfam" id="NF001972">
    <property type="entry name" value="PRK00753.1"/>
    <property type="match status" value="1"/>
</dbReference>
<dbReference type="Pfam" id="PF02419">
    <property type="entry name" value="PsbL"/>
    <property type="match status" value="1"/>
</dbReference>
<dbReference type="SUPFAM" id="SSF161017">
    <property type="entry name" value="Photosystem II reaction center protein L, PsbL"/>
    <property type="match status" value="1"/>
</dbReference>
<reference key="1">
    <citation type="submission" date="2002-07" db="EMBL/GenBank/DDBJ databases">
        <title>Parsing out signal and noise for seed-plant phylogenetic inference.</title>
        <authorList>
            <person name="Graham S.W."/>
            <person name="Rai H.S."/>
            <person name="Ikegami K."/>
            <person name="Reeves P.A."/>
            <person name="Olmstead R.G."/>
        </authorList>
    </citation>
    <scope>NUCLEOTIDE SEQUENCE [GENOMIC DNA]</scope>
</reference>
<geneLocation type="chloroplast"/>
<proteinExistence type="inferred from homology"/>
<accession>Q6EYP1</accession>
<feature type="chain" id="PRO_0000219775" description="Photosystem II reaction center protein L">
    <location>
        <begin position="1"/>
        <end position="38"/>
    </location>
</feature>
<feature type="transmembrane region" description="Helical" evidence="1">
    <location>
        <begin position="17"/>
        <end position="37"/>
    </location>
</feature>
<organism>
    <name type="scientific">Stewartia pseudocamellia</name>
    <name type="common">Japanese stewartia</name>
    <name type="synonym">Stewartia koreana</name>
    <dbReference type="NCBI Taxonomy" id="59679"/>
    <lineage>
        <taxon>Eukaryota</taxon>
        <taxon>Viridiplantae</taxon>
        <taxon>Streptophyta</taxon>
        <taxon>Embryophyta</taxon>
        <taxon>Tracheophyta</taxon>
        <taxon>Spermatophyta</taxon>
        <taxon>Magnoliopsida</taxon>
        <taxon>eudicotyledons</taxon>
        <taxon>Gunneridae</taxon>
        <taxon>Pentapetalae</taxon>
        <taxon>asterids</taxon>
        <taxon>Ericales</taxon>
        <taxon>Theaceae</taxon>
        <taxon>Stewartia</taxon>
    </lineage>
</organism>
<protein>
    <recommendedName>
        <fullName evidence="1">Photosystem II reaction center protein L</fullName>
        <shortName evidence="1">PSII-L</shortName>
    </recommendedName>
</protein>